<protein>
    <recommendedName>
        <fullName>Platelet endothelial aggregation receptor 1</fullName>
        <shortName>mPEAR1</shortName>
    </recommendedName>
    <alternativeName>
        <fullName>Jagged and Delta protein</fullName>
        <shortName>Protein Jedi</shortName>
    </alternativeName>
    <alternativeName>
        <fullName>Multiple epidermal growth factor-like domains protein 12</fullName>
        <shortName>Multiple EGF-like domains protein 12</shortName>
    </alternativeName>
</protein>
<evidence type="ECO:0000250" key="1"/>
<evidence type="ECO:0000250" key="2">
    <source>
        <dbReference type="UniProtKB" id="Q5VY43"/>
    </source>
</evidence>
<evidence type="ECO:0000255" key="3"/>
<evidence type="ECO:0000255" key="4">
    <source>
        <dbReference type="PROSITE-ProRule" id="PRU00076"/>
    </source>
</evidence>
<evidence type="ECO:0000255" key="5">
    <source>
        <dbReference type="PROSITE-ProRule" id="PRU00384"/>
    </source>
</evidence>
<evidence type="ECO:0000256" key="6">
    <source>
        <dbReference type="SAM" id="MobiDB-lite"/>
    </source>
</evidence>
<evidence type="ECO:0000269" key="7">
    <source>
    </source>
</evidence>
<evidence type="ECO:0000269" key="8">
    <source>
    </source>
</evidence>
<evidence type="ECO:0000269" key="9">
    <source>
    </source>
</evidence>
<evidence type="ECO:0000303" key="10">
    <source>
    </source>
</evidence>
<evidence type="ECO:0000303" key="11">
    <source>
    </source>
</evidence>
<evidence type="ECO:0000303" key="12">
    <source>
    </source>
</evidence>
<evidence type="ECO:0000305" key="13"/>
<organism>
    <name type="scientific">Mus musculus</name>
    <name type="common">Mouse</name>
    <dbReference type="NCBI Taxonomy" id="10090"/>
    <lineage>
        <taxon>Eukaryota</taxon>
        <taxon>Metazoa</taxon>
        <taxon>Chordata</taxon>
        <taxon>Craniata</taxon>
        <taxon>Vertebrata</taxon>
        <taxon>Euteleostomi</taxon>
        <taxon>Mammalia</taxon>
        <taxon>Eutheria</taxon>
        <taxon>Euarchontoglires</taxon>
        <taxon>Glires</taxon>
        <taxon>Rodentia</taxon>
        <taxon>Myomorpha</taxon>
        <taxon>Muroidea</taxon>
        <taxon>Muridae</taxon>
        <taxon>Murinae</taxon>
        <taxon>Mus</taxon>
        <taxon>Mus</taxon>
    </lineage>
</organism>
<gene>
    <name type="primary">Pear1</name>
    <name evidence="12" type="synonym">Jedi</name>
    <name type="synonym">Megf12</name>
</gene>
<name>PEAR1_MOUSE</name>
<accession>Q8VIK5</accession>
<accession>Q3URX7</accession>
<accession>Q6KAQ6</accession>
<accession>Q8CGA7</accession>
<accession>Q8VHF4</accession>
<accession>Q8VHL7</accession>
<proteinExistence type="evidence at protein level"/>
<dbReference type="EMBL" id="AF461685">
    <property type="protein sequence ID" value="AAL66380.1"/>
    <property type="molecule type" value="mRNA"/>
</dbReference>
<dbReference type="EMBL" id="AF444274">
    <property type="protein sequence ID" value="AAL38571.1"/>
    <property type="molecule type" value="mRNA"/>
</dbReference>
<dbReference type="EMBL" id="AF440279">
    <property type="protein sequence ID" value="AAL33583.1"/>
    <property type="molecule type" value="mRNA"/>
</dbReference>
<dbReference type="EMBL" id="AK141082">
    <property type="protein sequence ID" value="BAE24560.1"/>
    <property type="status" value="ALT_INIT"/>
    <property type="molecule type" value="mRNA"/>
</dbReference>
<dbReference type="EMBL" id="AK053551">
    <property type="protein sequence ID" value="BAC35426.1"/>
    <property type="molecule type" value="mRNA"/>
</dbReference>
<dbReference type="EMBL" id="BC042490">
    <property type="protein sequence ID" value="AAH42490.1"/>
    <property type="molecule type" value="mRNA"/>
</dbReference>
<dbReference type="EMBL" id="AK131151">
    <property type="protein sequence ID" value="BAD21401.1"/>
    <property type="molecule type" value="Transcribed_RNA"/>
</dbReference>
<dbReference type="CCDS" id="CCDS38474.1">
    <molecule id="Q8VIK5-1"/>
</dbReference>
<dbReference type="RefSeq" id="NP_001027585.1">
    <molecule id="Q8VIK5-1"/>
    <property type="nucleotide sequence ID" value="NM_001032413.1"/>
</dbReference>
<dbReference type="RefSeq" id="NP_001027586.1">
    <molecule id="Q8VIK5-1"/>
    <property type="nucleotide sequence ID" value="NM_001032414.1"/>
</dbReference>
<dbReference type="RefSeq" id="NP_001276529.1">
    <property type="nucleotide sequence ID" value="NM_001289600.1"/>
</dbReference>
<dbReference type="RefSeq" id="NP_001276530.1">
    <property type="nucleotide sequence ID" value="NM_001289601.1"/>
</dbReference>
<dbReference type="RefSeq" id="NP_082736.1">
    <molecule id="Q8VIK5-1"/>
    <property type="nucleotide sequence ID" value="NM_028460.2"/>
</dbReference>
<dbReference type="RefSeq" id="NP_690012.2">
    <molecule id="Q8VIK5-1"/>
    <property type="nucleotide sequence ID" value="NM_152799.2"/>
</dbReference>
<dbReference type="SMR" id="Q8VIK5"/>
<dbReference type="FunCoup" id="Q8VIK5">
    <property type="interactions" value="833"/>
</dbReference>
<dbReference type="STRING" id="10090.ENSMUSP00000133474"/>
<dbReference type="GlyCosmos" id="Q8VIK5">
    <property type="glycosylation" value="3 sites, No reported glycans"/>
</dbReference>
<dbReference type="GlyGen" id="Q8VIK5">
    <property type="glycosylation" value="5 sites, 3 N-linked glycans (3 sites)"/>
</dbReference>
<dbReference type="iPTMnet" id="Q8VIK5"/>
<dbReference type="PhosphoSitePlus" id="Q8VIK5"/>
<dbReference type="PaxDb" id="10090-ENSMUSP00000133474"/>
<dbReference type="PeptideAtlas" id="Q8VIK5"/>
<dbReference type="ProteomicsDB" id="287666">
    <molecule id="Q8VIK5-1"/>
</dbReference>
<dbReference type="ProteomicsDB" id="287667">
    <molecule id="Q8VIK5-2"/>
</dbReference>
<dbReference type="ProteomicsDB" id="287668">
    <molecule id="Q8VIK5-3"/>
</dbReference>
<dbReference type="ProteomicsDB" id="287669">
    <molecule id="Q8VIK5-4"/>
</dbReference>
<dbReference type="Antibodypedia" id="49426">
    <property type="antibodies" value="174 antibodies from 29 providers"/>
</dbReference>
<dbReference type="DNASU" id="73182"/>
<dbReference type="Ensembl" id="ENSMUST00000079083.12">
    <molecule id="Q8VIK5-1"/>
    <property type="protein sequence ID" value="ENSMUSP00000078090.6"/>
    <property type="gene ID" value="ENSMUSG00000028073.17"/>
</dbReference>
<dbReference type="Ensembl" id="ENSMUST00000172621.8">
    <molecule id="Q8VIK5-1"/>
    <property type="protein sequence ID" value="ENSMUSP00000133474.2"/>
    <property type="gene ID" value="ENSMUSG00000028073.17"/>
</dbReference>
<dbReference type="Ensembl" id="ENSMUST00000174759.8">
    <molecule id="Q8VIK5-1"/>
    <property type="protein sequence ID" value="ENSMUSP00000133323.2"/>
    <property type="gene ID" value="ENSMUSG00000028073.17"/>
</dbReference>
<dbReference type="GeneID" id="73182"/>
<dbReference type="KEGG" id="mmu:73182"/>
<dbReference type="UCSC" id="uc008psq.1">
    <molecule id="Q8VIK5-1"/>
    <property type="organism name" value="mouse"/>
</dbReference>
<dbReference type="AGR" id="MGI:1920432"/>
<dbReference type="CTD" id="375033"/>
<dbReference type="MGI" id="MGI:1920432">
    <property type="gene designation" value="Pear1"/>
</dbReference>
<dbReference type="VEuPathDB" id="HostDB:ENSMUSG00000028073"/>
<dbReference type="eggNOG" id="KOG1218">
    <property type="taxonomic scope" value="Eukaryota"/>
</dbReference>
<dbReference type="GeneTree" id="ENSGT00940000154225"/>
<dbReference type="HOGENOM" id="CLU_008281_1_0_1"/>
<dbReference type="InParanoid" id="Q8VIK5"/>
<dbReference type="OMA" id="CPRDTHG"/>
<dbReference type="OrthoDB" id="10268124at2759"/>
<dbReference type="PhylomeDB" id="Q8VIK5"/>
<dbReference type="TreeFam" id="TF332598"/>
<dbReference type="BioGRID-ORCS" id="73182">
    <property type="hits" value="0 hits in 77 CRISPR screens"/>
</dbReference>
<dbReference type="ChiTaRS" id="Pear1">
    <property type="organism name" value="mouse"/>
</dbReference>
<dbReference type="PRO" id="PR:Q8VIK5"/>
<dbReference type="Proteomes" id="UP000000589">
    <property type="component" value="Chromosome 3"/>
</dbReference>
<dbReference type="RNAct" id="Q8VIK5">
    <property type="molecule type" value="protein"/>
</dbReference>
<dbReference type="Bgee" id="ENSMUSG00000028073">
    <property type="expression patterns" value="Expressed in external carotid artery and 207 other cell types or tissues"/>
</dbReference>
<dbReference type="ExpressionAtlas" id="Q8VIK5">
    <property type="expression patterns" value="baseline and differential"/>
</dbReference>
<dbReference type="GO" id="GO:0030027">
    <property type="term" value="C:lamellipodium"/>
    <property type="evidence" value="ECO:0007669"/>
    <property type="project" value="UniProtKB-SubCell"/>
</dbReference>
<dbReference type="GO" id="GO:0001891">
    <property type="term" value="C:phagocytic cup"/>
    <property type="evidence" value="ECO:0000314"/>
    <property type="project" value="MGI"/>
</dbReference>
<dbReference type="GO" id="GO:0005886">
    <property type="term" value="C:plasma membrane"/>
    <property type="evidence" value="ECO:0000314"/>
    <property type="project" value="MGI"/>
</dbReference>
<dbReference type="GO" id="GO:0038023">
    <property type="term" value="F:signaling receptor activity"/>
    <property type="evidence" value="ECO:0000314"/>
    <property type="project" value="MGI"/>
</dbReference>
<dbReference type="GO" id="GO:0043491">
    <property type="term" value="P:phosphatidylinositol 3-kinase/protein kinase B signal transduction"/>
    <property type="evidence" value="ECO:0000315"/>
    <property type="project" value="MGI"/>
</dbReference>
<dbReference type="GO" id="GO:0070527">
    <property type="term" value="P:platelet aggregation"/>
    <property type="evidence" value="ECO:0000314"/>
    <property type="project" value="MGI"/>
</dbReference>
<dbReference type="GO" id="GO:0010572">
    <property type="term" value="P:positive regulation of platelet activation"/>
    <property type="evidence" value="ECO:0000315"/>
    <property type="project" value="UniProtKB"/>
</dbReference>
<dbReference type="GO" id="GO:0043654">
    <property type="term" value="P:recognition of apoptotic cell"/>
    <property type="evidence" value="ECO:0000314"/>
    <property type="project" value="MGI"/>
</dbReference>
<dbReference type="FunFam" id="2.170.300.10:FF:000002">
    <property type="entry name" value="Multiple epidermal growth factor-like domains 10"/>
    <property type="match status" value="1"/>
</dbReference>
<dbReference type="FunFam" id="2.170.300.10:FF:000007">
    <property type="entry name" value="multiple epidermal growth factor-like domains protein 10"/>
    <property type="match status" value="1"/>
</dbReference>
<dbReference type="FunFam" id="2.170.300.10:FF:000019">
    <property type="entry name" value="Platelet endothelial aggregation receptor 1"/>
    <property type="match status" value="1"/>
</dbReference>
<dbReference type="FunFam" id="2.170.300.10:FF:000021">
    <property type="entry name" value="Platelet endothelial aggregation receptor 1"/>
    <property type="match status" value="1"/>
</dbReference>
<dbReference type="FunFam" id="2.170.300.10:FF:000025">
    <property type="entry name" value="Platelet endothelial aggregation receptor 1"/>
    <property type="match status" value="1"/>
</dbReference>
<dbReference type="Gene3D" id="2.10.25.10">
    <property type="entry name" value="Laminin"/>
    <property type="match status" value="1"/>
</dbReference>
<dbReference type="Gene3D" id="2.170.300.10">
    <property type="entry name" value="Tie2 ligand-binding domain superfamily"/>
    <property type="match status" value="4"/>
</dbReference>
<dbReference type="InterPro" id="IPR000742">
    <property type="entry name" value="EGF-like_dom"/>
</dbReference>
<dbReference type="InterPro" id="IPR057138">
    <property type="entry name" value="EGF_PEAR1L-like"/>
</dbReference>
<dbReference type="InterPro" id="IPR011489">
    <property type="entry name" value="EMI_domain"/>
</dbReference>
<dbReference type="InterPro" id="IPR009030">
    <property type="entry name" value="Growth_fac_rcpt_cys_sf"/>
</dbReference>
<dbReference type="InterPro" id="IPR002049">
    <property type="entry name" value="LE_dom"/>
</dbReference>
<dbReference type="InterPro" id="IPR052485">
    <property type="entry name" value="MEGF_diff_regulators"/>
</dbReference>
<dbReference type="PANTHER" id="PTHR24052">
    <property type="entry name" value="DELTA-RELATED"/>
    <property type="match status" value="1"/>
</dbReference>
<dbReference type="PANTHER" id="PTHR24052:SF12">
    <property type="entry name" value="PLATELET ENDOTHELIAL AGGREGATION RECEPTOR 1"/>
    <property type="match status" value="1"/>
</dbReference>
<dbReference type="Pfam" id="PF00053">
    <property type="entry name" value="EGF_laminin"/>
    <property type="match status" value="4"/>
</dbReference>
<dbReference type="Pfam" id="PF23301">
    <property type="entry name" value="EGF_PEAR1L"/>
    <property type="match status" value="1"/>
</dbReference>
<dbReference type="PRINTS" id="PR00011">
    <property type="entry name" value="EGFLAMININ"/>
</dbReference>
<dbReference type="SMART" id="SM00181">
    <property type="entry name" value="EGF"/>
    <property type="match status" value="15"/>
</dbReference>
<dbReference type="SMART" id="SM00180">
    <property type="entry name" value="EGF_Lam"/>
    <property type="match status" value="13"/>
</dbReference>
<dbReference type="SUPFAM" id="SSF57184">
    <property type="entry name" value="Growth factor receptor domain"/>
    <property type="match status" value="1"/>
</dbReference>
<dbReference type="PROSITE" id="PS00022">
    <property type="entry name" value="EGF_1"/>
    <property type="match status" value="13"/>
</dbReference>
<dbReference type="PROSITE" id="PS01186">
    <property type="entry name" value="EGF_2"/>
    <property type="match status" value="12"/>
</dbReference>
<dbReference type="PROSITE" id="PS50026">
    <property type="entry name" value="EGF_3"/>
    <property type="match status" value="9"/>
</dbReference>
<dbReference type="PROSITE" id="PS51041">
    <property type="entry name" value="EMI"/>
    <property type="match status" value="1"/>
</dbReference>
<reference key="1">
    <citation type="journal article" date="2007" name="J. Cell. Biochem.">
        <title>Jedi -- a novel transmembrane protein expressed in early hematopoietic cells.</title>
        <authorList>
            <person name="Krivtsov A.V."/>
            <person name="Rozov F.N."/>
            <person name="Zinovyeva M.V."/>
            <person name="Hendrikx P.J."/>
            <person name="Jiang Y."/>
            <person name="Visser J.W."/>
            <person name="Belyavsky A.V."/>
        </authorList>
    </citation>
    <scope>NUCLEOTIDE SEQUENCE [MRNA] (ISOFORMS 1 AND 3)</scope>
    <scope>FUNCTION</scope>
    <scope>PHOSPHORYLATION</scope>
    <scope>TISSUE SPECIFICITY</scope>
    <source>
        <strain>C57BL/6J</strain>
        <tissue>Testis</tissue>
    </source>
</reference>
<reference key="2">
    <citation type="submission" date="2001-10" db="EMBL/GenBank/DDBJ databases">
        <title>The global gene expression profiling of the hematopoietic stem cell.</title>
        <authorList>
            <person name="Ivanova N.B."/>
            <person name="Lemischka I.R."/>
        </authorList>
    </citation>
    <scope>NUCLEOTIDE SEQUENCE [MRNA] (ISOFORM 1)</scope>
    <source>
        <strain>C57BL/6J</strain>
        <tissue>Fetal liver</tissue>
    </source>
</reference>
<reference key="3">
    <citation type="journal article" date="2005" name="Science">
        <title>The transcriptional landscape of the mammalian genome.</title>
        <authorList>
            <person name="Carninci P."/>
            <person name="Kasukawa T."/>
            <person name="Katayama S."/>
            <person name="Gough J."/>
            <person name="Frith M.C."/>
            <person name="Maeda N."/>
            <person name="Oyama R."/>
            <person name="Ravasi T."/>
            <person name="Lenhard B."/>
            <person name="Wells C."/>
            <person name="Kodzius R."/>
            <person name="Shimokawa K."/>
            <person name="Bajic V.B."/>
            <person name="Brenner S.E."/>
            <person name="Batalov S."/>
            <person name="Forrest A.R."/>
            <person name="Zavolan M."/>
            <person name="Davis M.J."/>
            <person name="Wilming L.G."/>
            <person name="Aidinis V."/>
            <person name="Allen J.E."/>
            <person name="Ambesi-Impiombato A."/>
            <person name="Apweiler R."/>
            <person name="Aturaliya R.N."/>
            <person name="Bailey T.L."/>
            <person name="Bansal M."/>
            <person name="Baxter L."/>
            <person name="Beisel K.W."/>
            <person name="Bersano T."/>
            <person name="Bono H."/>
            <person name="Chalk A.M."/>
            <person name="Chiu K.P."/>
            <person name="Choudhary V."/>
            <person name="Christoffels A."/>
            <person name="Clutterbuck D.R."/>
            <person name="Crowe M.L."/>
            <person name="Dalla E."/>
            <person name="Dalrymple B.P."/>
            <person name="de Bono B."/>
            <person name="Della Gatta G."/>
            <person name="di Bernardo D."/>
            <person name="Down T."/>
            <person name="Engstrom P."/>
            <person name="Fagiolini M."/>
            <person name="Faulkner G."/>
            <person name="Fletcher C.F."/>
            <person name="Fukushima T."/>
            <person name="Furuno M."/>
            <person name="Futaki S."/>
            <person name="Gariboldi M."/>
            <person name="Georgii-Hemming P."/>
            <person name="Gingeras T.R."/>
            <person name="Gojobori T."/>
            <person name="Green R.E."/>
            <person name="Gustincich S."/>
            <person name="Harbers M."/>
            <person name="Hayashi Y."/>
            <person name="Hensch T.K."/>
            <person name="Hirokawa N."/>
            <person name="Hill D."/>
            <person name="Huminiecki L."/>
            <person name="Iacono M."/>
            <person name="Ikeo K."/>
            <person name="Iwama A."/>
            <person name="Ishikawa T."/>
            <person name="Jakt M."/>
            <person name="Kanapin A."/>
            <person name="Katoh M."/>
            <person name="Kawasawa Y."/>
            <person name="Kelso J."/>
            <person name="Kitamura H."/>
            <person name="Kitano H."/>
            <person name="Kollias G."/>
            <person name="Krishnan S.P."/>
            <person name="Kruger A."/>
            <person name="Kummerfeld S.K."/>
            <person name="Kurochkin I.V."/>
            <person name="Lareau L.F."/>
            <person name="Lazarevic D."/>
            <person name="Lipovich L."/>
            <person name="Liu J."/>
            <person name="Liuni S."/>
            <person name="McWilliam S."/>
            <person name="Madan Babu M."/>
            <person name="Madera M."/>
            <person name="Marchionni L."/>
            <person name="Matsuda H."/>
            <person name="Matsuzawa S."/>
            <person name="Miki H."/>
            <person name="Mignone F."/>
            <person name="Miyake S."/>
            <person name="Morris K."/>
            <person name="Mottagui-Tabar S."/>
            <person name="Mulder N."/>
            <person name="Nakano N."/>
            <person name="Nakauchi H."/>
            <person name="Ng P."/>
            <person name="Nilsson R."/>
            <person name="Nishiguchi S."/>
            <person name="Nishikawa S."/>
            <person name="Nori F."/>
            <person name="Ohara O."/>
            <person name="Okazaki Y."/>
            <person name="Orlando V."/>
            <person name="Pang K.C."/>
            <person name="Pavan W.J."/>
            <person name="Pavesi G."/>
            <person name="Pesole G."/>
            <person name="Petrovsky N."/>
            <person name="Piazza S."/>
            <person name="Reed J."/>
            <person name="Reid J.F."/>
            <person name="Ring B.Z."/>
            <person name="Ringwald M."/>
            <person name="Rost B."/>
            <person name="Ruan Y."/>
            <person name="Salzberg S.L."/>
            <person name="Sandelin A."/>
            <person name="Schneider C."/>
            <person name="Schoenbach C."/>
            <person name="Sekiguchi K."/>
            <person name="Semple C.A."/>
            <person name="Seno S."/>
            <person name="Sessa L."/>
            <person name="Sheng Y."/>
            <person name="Shibata Y."/>
            <person name="Shimada H."/>
            <person name="Shimada K."/>
            <person name="Silva D."/>
            <person name="Sinclair B."/>
            <person name="Sperling S."/>
            <person name="Stupka E."/>
            <person name="Sugiura K."/>
            <person name="Sultana R."/>
            <person name="Takenaka Y."/>
            <person name="Taki K."/>
            <person name="Tammoja K."/>
            <person name="Tan S.L."/>
            <person name="Tang S."/>
            <person name="Taylor M.S."/>
            <person name="Tegner J."/>
            <person name="Teichmann S.A."/>
            <person name="Ueda H.R."/>
            <person name="van Nimwegen E."/>
            <person name="Verardo R."/>
            <person name="Wei C.L."/>
            <person name="Yagi K."/>
            <person name="Yamanishi H."/>
            <person name="Zabarovsky E."/>
            <person name="Zhu S."/>
            <person name="Zimmer A."/>
            <person name="Hide W."/>
            <person name="Bult C."/>
            <person name="Grimmond S.M."/>
            <person name="Teasdale R.D."/>
            <person name="Liu E.T."/>
            <person name="Brusic V."/>
            <person name="Quackenbush J."/>
            <person name="Wahlestedt C."/>
            <person name="Mattick J.S."/>
            <person name="Hume D.A."/>
            <person name="Kai C."/>
            <person name="Sasaki D."/>
            <person name="Tomaru Y."/>
            <person name="Fukuda S."/>
            <person name="Kanamori-Katayama M."/>
            <person name="Suzuki M."/>
            <person name="Aoki J."/>
            <person name="Arakawa T."/>
            <person name="Iida J."/>
            <person name="Imamura K."/>
            <person name="Itoh M."/>
            <person name="Kato T."/>
            <person name="Kawaji H."/>
            <person name="Kawagashira N."/>
            <person name="Kawashima T."/>
            <person name="Kojima M."/>
            <person name="Kondo S."/>
            <person name="Konno H."/>
            <person name="Nakano K."/>
            <person name="Ninomiya N."/>
            <person name="Nishio T."/>
            <person name="Okada M."/>
            <person name="Plessy C."/>
            <person name="Shibata K."/>
            <person name="Shiraki T."/>
            <person name="Suzuki S."/>
            <person name="Tagami M."/>
            <person name="Waki K."/>
            <person name="Watahiki A."/>
            <person name="Okamura-Oho Y."/>
            <person name="Suzuki H."/>
            <person name="Kawai J."/>
            <person name="Hayashizaki Y."/>
        </authorList>
    </citation>
    <scope>NUCLEOTIDE SEQUENCE [LARGE SCALE MRNA] (ISOFORMS 1 AND 4)</scope>
    <source>
        <strain>C57BL/6J</strain>
        <tissue>Fetal cerebellum</tissue>
        <tissue>Fetal eye</tissue>
    </source>
</reference>
<reference key="4">
    <citation type="journal article" date="2004" name="Genome Res.">
        <title>The status, quality, and expansion of the NIH full-length cDNA project: the Mammalian Gene Collection (MGC).</title>
        <authorList>
            <consortium name="The MGC Project Team"/>
        </authorList>
    </citation>
    <scope>NUCLEOTIDE SEQUENCE [LARGE SCALE MRNA] (ISOFORM 2)</scope>
    <source>
        <strain>FVB/N</strain>
        <tissue>Mammary tumor</tissue>
    </source>
</reference>
<reference key="5">
    <citation type="journal article" date="2004" name="DNA Res.">
        <title>Prediction of the coding sequences of mouse homologues of FLJ genes: the complete nucleotide sequences of 110 mouse FLJ-homologous cDNAs identified by screening of terminal sequences of cDNA clones randomly sampled from size-fractionated libraries.</title>
        <authorList>
            <person name="Okazaki N."/>
            <person name="Kikuno R."/>
            <person name="Ohara R."/>
            <person name="Inamoto S."/>
            <person name="Koseki H."/>
            <person name="Hiraoka S."/>
            <person name="Saga Y."/>
            <person name="Kitamura H."/>
            <person name="Nakagawa T."/>
            <person name="Nagase T."/>
            <person name="Ohara O."/>
            <person name="Koga H."/>
        </authorList>
    </citation>
    <scope>NUCLEOTIDE SEQUENCE [LARGE SCALE MRNA] OF 560-1034 (ISOFORM 1)</scope>
    <source>
        <tissue>Natural killer cell</tissue>
    </source>
</reference>
<reference key="6">
    <citation type="journal article" date="2005" name="J. Biol. Chem.">
        <title>Platelet endothelial aggregation receptor 1 (PEAR1), a novel epidermal growth factor repeat-containing transmembrane receptor, participates in platelet contact-induced activation.</title>
        <authorList>
            <person name="Nanda N."/>
            <person name="Bao M."/>
            <person name="Lin H."/>
            <person name="Clauser K."/>
            <person name="Komuves L."/>
            <person name="Quertermous T."/>
            <person name="Conley P.B."/>
            <person name="Phillips D.R."/>
            <person name="Hart M.J."/>
        </authorList>
    </citation>
    <scope>DEVELOPMENTAL STAGE</scope>
    <source>
        <tissue>Platelet</tissue>
    </source>
</reference>
<reference key="7">
    <citation type="journal article" date="2023" name="Nat. Commun.">
        <title>SVEP1 is an endogenous ligand for the orphan receptor PEAR1.</title>
        <authorList>
            <person name="Elenbaas J.S."/>
            <person name="Pudupakkam U."/>
            <person name="Ashworth K.J."/>
            <person name="Kang C.J."/>
            <person name="Patel V."/>
            <person name="Santana K."/>
            <person name="Jung I.H."/>
            <person name="Lee P.C."/>
            <person name="Burks K.H."/>
            <person name="Amrute J.M."/>
            <person name="Mecham R.P."/>
            <person name="Halabi C.M."/>
            <person name="Alisio A."/>
            <person name="Di Paola J."/>
            <person name="Stitziel N.O."/>
        </authorList>
    </citation>
    <scope>FUNCTION</scope>
</reference>
<keyword id="KW-0025">Alternative splicing</keyword>
<keyword id="KW-1003">Cell membrane</keyword>
<keyword id="KW-0966">Cell projection</keyword>
<keyword id="KW-1015">Disulfide bond</keyword>
<keyword id="KW-0245">EGF-like domain</keyword>
<keyword id="KW-0325">Glycoprotein</keyword>
<keyword id="KW-0472">Membrane</keyword>
<keyword id="KW-0597">Phosphoprotein</keyword>
<keyword id="KW-1185">Reference proteome</keyword>
<keyword id="KW-0677">Repeat</keyword>
<keyword id="KW-0732">Signal</keyword>
<keyword id="KW-0812">Transmembrane</keyword>
<keyword id="KW-1133">Transmembrane helix</keyword>
<sequence>MPLCPLLLLALGLRLTGTLNSNDPNVCTFWESFTTTTKESHLRPFSLLPAESCHRPWEDPHTCAQPTVVYRTVYRQVVKMDSRPRLQCCRGYYESRGACVPLCAQECVHGRCVAPNQCQCAPGWRGGDCSSECAPGMWGPQCDKFCHCGNNSSCDPKSGTCFCPSGLQPPNCLQPCPAGHYGPACQFDCQCYGASCDPQDGACFCPPGRAGPSCNVPCSQGTDGFFCPRTYPCQNGGVPQGSQGSCSCPPGWMGVICSLPCPEGFHGPNCTQECRCHNGGLCDRFTGQCHCAPGYIGDRCQEECPVGRFGQDCAETCDCAPGARCFPANGACLCEHGFTGDRCTERLCPDGRYGLSCQEPCTCDPEHSLSCHPMHGECSCQPGWAGLHCNESCPQDTHGPGCQEHCLCLHGGLCLADSGLCRCAPGYTGPHCANLCPPDTYGINCSSRCSCENAIACSPIDGTCICKEGWQRGNCSVPCPLGTWGFNCNASCQCAHDGVCSPQTGACTCTPGWHGAHCQLPCPKGQFGEGCASVCDCDHSDGCDPVHGQCRCQAGWMGTRCHLPCPEGFWGANCSNTCTCKNGGTCVSENGNCVCAPGFRGPSCQRPCPPGRYGKRCVQCKCNNNHSSCHPSDGTCSCLAGWTGPDCSEACPPGHWGLKCSQLCQCHHGGTCHPQDGSCICTPGWTGPNCLEGCPPRMFGVNCSQLCQCDLGEMCHPETGACVCPPGHSGADCKMGSQESFTIMPTSPVTHNSLGAVIGIAVLGTLVVALIALFIGYRQWQKGKEHEHLAVAYSTGRLDGSDYVMPDVSPSYSHYYSNPSYHTLSQCSPNPPPPNKVPGSQLFVSSQAPERPSRAHGRENHVTLPADWKHRREPHERGASHLDRSYSCSYSHRNGPGPFCHKGPISEEGLGASVMSLSSENPYATIRDLPSLPGEPRESGYVEMKGPPSVSPPRQSLHLRDRQQRQLQPQRDSGTYEQPSPLSHNEESLGSTPPLPPGLPPGHYDSPKNSHIPGHYDLPPVRHPPSPPSRRQDR</sequence>
<comment type="function">
    <text evidence="8 9">Required for SVEP1-mediated platelet activation, via its interaction with SVEP1 and subsequent activation of AKT/mTOR signaling (PubMed:36792666). May be involved in the early stages of hematopoiesis (PubMed:17226770).</text>
</comment>
<comment type="subunit">
    <text evidence="2">Interacts with SHC2 upon its aggregation-induced tyrosine phosphorylation (By similarity). Interacts (via extracellular domain) with SVEP1 (By similarity).</text>
</comment>
<comment type="subcellular location">
    <subcellularLocation>
        <location evidence="2">Cell membrane</location>
        <topology evidence="3">Single-pass membrane protein</topology>
    </subcellularLocation>
    <subcellularLocation>
        <location evidence="2">Cell projection</location>
        <location evidence="2">Lamellipodium</location>
    </subcellularLocation>
    <text evidence="2">Detected on the cell surface in resting platelets.</text>
</comment>
<comment type="alternative products">
    <event type="alternative splicing"/>
    <isoform>
        <id>Q8VIK5-1</id>
        <name>1</name>
        <sequence type="displayed"/>
    </isoform>
    <isoform>
        <id>Q8VIK5-2</id>
        <name>2</name>
        <sequence type="described" ref="VSP_029261"/>
    </isoform>
    <isoform>
        <id>Q8VIK5-3</id>
        <name>3</name>
        <name>Jedi-736</name>
        <sequence type="described" ref="VSP_029262 VSP_029263"/>
    </isoform>
    <isoform>
        <id>Q8VIK5-4</id>
        <name>4</name>
        <sequence type="described" ref="VSP_029260"/>
    </isoform>
</comment>
<comment type="tissue specificity">
    <text evidence="8">Expressed in thymocytes, bone marrow stromal and osteogenic cells (at protein level) (PubMed:17226770). Strongly expressed in kidney and heart (PubMed:17226770). Moderately expressed in lung, spleen, thymus, liver, brain, testis, skin and stomach (PubMed:17226770). Expressed in hematopoietic stem progenitor cells (PubMed:17226770).</text>
</comment>
<comment type="developmental stage">
    <text evidence="7">Expressed in the heart and lung at 16 dpc.</text>
</comment>
<comment type="PTM">
    <text evidence="2 8">Phosphorylated in the intracellular domain on tyrosine residues (PubMed:17226770). Phosphorylated on tyrosine residues by SRC (By similarity). Tyrosine phosphorylation is detected upon platelet aggregation stimulated by collagen, TRAP and thrombin and platelet-platelet contacts but not after platelet activation (By similarity). Tyrosine phosphorylation enhanced its association with SHC1 and SHC2 (By similarity). Phosphorylated in the intracellular domain on tyrosine residues (By similarity). Phosphorylated when in the presence of SVEP1 (By similarity).</text>
</comment>
<comment type="similarity">
    <text evidence="13">Belongs to the MEGF family.</text>
</comment>
<comment type="sequence caution" evidence="13">
    <conflict type="erroneous initiation">
        <sequence resource="EMBL-CDS" id="BAE24560"/>
    </conflict>
</comment>
<feature type="signal peptide" evidence="3">
    <location>
        <begin position="1"/>
        <end position="18"/>
    </location>
</feature>
<feature type="chain" id="PRO_0000309738" description="Platelet endothelial aggregation receptor 1">
    <location>
        <begin position="19"/>
        <end position="1034"/>
    </location>
</feature>
<feature type="topological domain" description="Extracellular" evidence="3">
    <location>
        <begin position="19"/>
        <end position="754"/>
    </location>
</feature>
<feature type="transmembrane region" description="Helical" evidence="3">
    <location>
        <begin position="755"/>
        <end position="775"/>
    </location>
</feature>
<feature type="topological domain" description="Cytoplasmic" evidence="3">
    <location>
        <begin position="776"/>
        <end position="1034"/>
    </location>
</feature>
<feature type="domain" description="EMI" evidence="5">
    <location>
        <begin position="23"/>
        <end position="101"/>
    </location>
</feature>
<feature type="domain" description="EGF-like 1" evidence="4">
    <location>
        <begin position="181"/>
        <end position="215"/>
    </location>
</feature>
<feature type="domain" description="EGF-like 2" evidence="4">
    <location>
        <begin position="223"/>
        <end position="258"/>
    </location>
</feature>
<feature type="domain" description="EGF-like 3" evidence="4">
    <location>
        <begin position="266"/>
        <end position="301"/>
    </location>
</feature>
<feature type="domain" description="EGF-like 4" evidence="4">
    <location>
        <begin position="309"/>
        <end position="344"/>
    </location>
</feature>
<feature type="domain" description="EGF-like 5" evidence="4">
    <location>
        <begin position="398"/>
        <end position="433"/>
    </location>
</feature>
<feature type="domain" description="EGF-like 6" evidence="4">
    <location>
        <begin position="484"/>
        <end position="519"/>
    </location>
</feature>
<feature type="domain" description="EGF-like 7" evidence="4">
    <location>
        <begin position="575"/>
        <end position="605"/>
    </location>
</feature>
<feature type="domain" description="EGF-like 8" evidence="4">
    <location>
        <begin position="613"/>
        <end position="648"/>
    </location>
</feature>
<feature type="domain" description="EGF-like 9" evidence="4">
    <location>
        <begin position="656"/>
        <end position="691"/>
    </location>
</feature>
<feature type="region of interest" description="Disordered" evidence="6">
    <location>
        <begin position="823"/>
        <end position="883"/>
    </location>
</feature>
<feature type="region of interest" description="Disordered" evidence="6">
    <location>
        <begin position="925"/>
        <end position="1034"/>
    </location>
</feature>
<feature type="compositionally biased region" description="Basic and acidic residues" evidence="6">
    <location>
        <begin position="851"/>
        <end position="883"/>
    </location>
</feature>
<feature type="compositionally biased region" description="Polar residues" evidence="6">
    <location>
        <begin position="972"/>
        <end position="991"/>
    </location>
</feature>
<feature type="modified residue" description="Phosphotyrosine" evidence="2">
    <location>
        <position position="923"/>
    </location>
</feature>
<feature type="modified residue" description="Phosphoserine" evidence="2">
    <location>
        <position position="951"/>
    </location>
</feature>
<feature type="modified residue" description="Phosphoserine" evidence="2">
    <location>
        <position position="1026"/>
    </location>
</feature>
<feature type="glycosylation site" description="N-linked (GlcNAc...) asparagine" evidence="3">
    <location>
        <position position="150"/>
    </location>
</feature>
<feature type="glycosylation site" description="N-linked (GlcNAc...) asparagine" evidence="3">
    <location>
        <position position="269"/>
    </location>
</feature>
<feature type="glycosylation site" description="N-linked (GlcNAc...) asparagine" evidence="3">
    <location>
        <position position="474"/>
    </location>
</feature>
<feature type="disulfide bond" evidence="3">
    <location>
        <begin position="27"/>
        <end position="89"/>
    </location>
</feature>
<feature type="disulfide bond" evidence="3">
    <location>
        <begin position="53"/>
        <end position="63"/>
    </location>
</feature>
<feature type="disulfide bond" evidence="3">
    <location>
        <begin position="88"/>
        <end position="99"/>
    </location>
</feature>
<feature type="disulfide bond" evidence="1">
    <location>
        <begin position="185"/>
        <end position="196"/>
    </location>
</feature>
<feature type="disulfide bond" evidence="1">
    <location>
        <begin position="189"/>
        <end position="203"/>
    </location>
</feature>
<feature type="disulfide bond" evidence="1">
    <location>
        <begin position="205"/>
        <end position="214"/>
    </location>
</feature>
<feature type="disulfide bond" evidence="1">
    <location>
        <begin position="233"/>
        <end position="246"/>
    </location>
</feature>
<feature type="disulfide bond" evidence="1">
    <location>
        <begin position="248"/>
        <end position="257"/>
    </location>
</feature>
<feature type="disulfide bond" evidence="1">
    <location>
        <begin position="270"/>
        <end position="282"/>
    </location>
</feature>
<feature type="disulfide bond" evidence="1">
    <location>
        <begin position="276"/>
        <end position="289"/>
    </location>
</feature>
<feature type="disulfide bond" evidence="1">
    <location>
        <begin position="291"/>
        <end position="300"/>
    </location>
</feature>
<feature type="disulfide bond" evidence="1">
    <location>
        <begin position="313"/>
        <end position="325"/>
    </location>
</feature>
<feature type="disulfide bond" evidence="1">
    <location>
        <begin position="319"/>
        <end position="332"/>
    </location>
</feature>
<feature type="disulfide bond" evidence="1">
    <location>
        <begin position="334"/>
        <end position="343"/>
    </location>
</feature>
<feature type="disulfide bond" evidence="1">
    <location>
        <begin position="402"/>
        <end position="414"/>
    </location>
</feature>
<feature type="disulfide bond" evidence="1">
    <location>
        <begin position="408"/>
        <end position="421"/>
    </location>
</feature>
<feature type="disulfide bond" evidence="1">
    <location>
        <begin position="423"/>
        <end position="432"/>
    </location>
</feature>
<feature type="disulfide bond" evidence="1">
    <location>
        <begin position="488"/>
        <end position="500"/>
    </location>
</feature>
<feature type="disulfide bond" evidence="1">
    <location>
        <begin position="494"/>
        <end position="507"/>
    </location>
</feature>
<feature type="disulfide bond" evidence="1">
    <location>
        <begin position="509"/>
        <end position="518"/>
    </location>
</feature>
<feature type="disulfide bond" evidence="1">
    <location>
        <begin position="578"/>
        <end position="586"/>
    </location>
</feature>
<feature type="disulfide bond" evidence="1">
    <location>
        <begin position="580"/>
        <end position="593"/>
    </location>
</feature>
<feature type="disulfide bond" evidence="1">
    <location>
        <begin position="595"/>
        <end position="604"/>
    </location>
</feature>
<feature type="disulfide bond" evidence="1">
    <location>
        <begin position="617"/>
        <end position="629"/>
    </location>
</feature>
<feature type="disulfide bond" evidence="1">
    <location>
        <begin position="622"/>
        <end position="636"/>
    </location>
</feature>
<feature type="disulfide bond" evidence="1">
    <location>
        <begin position="638"/>
        <end position="647"/>
    </location>
</feature>
<feature type="disulfide bond" evidence="1">
    <location>
        <begin position="660"/>
        <end position="672"/>
    </location>
</feature>
<feature type="disulfide bond" evidence="1">
    <location>
        <begin position="666"/>
        <end position="679"/>
    </location>
</feature>
<feature type="disulfide bond" evidence="1">
    <location>
        <begin position="681"/>
        <end position="690"/>
    </location>
</feature>
<feature type="splice variant" id="VSP_029260" description="In isoform 4." evidence="11">
    <location>
        <begin position="1"/>
        <end position="136"/>
    </location>
</feature>
<feature type="splice variant" id="VSP_029261" description="In isoform 2." evidence="10">
    <location>
        <begin position="375"/>
        <end position="404"/>
    </location>
</feature>
<feature type="splice variant" id="VSP_029262" description="In isoform 3." evidence="12">
    <original>SQESFTIMPTS</original>
    <variation>ESFAPLTLVFL</variation>
    <location>
        <begin position="737"/>
        <end position="747"/>
    </location>
</feature>
<feature type="splice variant" id="VSP_029263" description="In isoform 3." evidence="12">
    <location>
        <begin position="748"/>
        <end position="1034"/>
    </location>
</feature>
<feature type="sequence conflict" description="In Ref. 1; AAL38571/AAL66380 and 4; AAH42490." evidence="13" ref="1 4">
    <original>T</original>
    <variation>A</variation>
    <location>
        <position position="160"/>
    </location>
</feature>
<feature type="sequence conflict" description="In Ref. 5; BAD21401." evidence="13" ref="5">
    <original>E</original>
    <variation>K</variation>
    <location>
        <position position="718"/>
    </location>
</feature>
<feature type="sequence conflict" description="In Ref. 1; AAL38571/AAL66380." evidence="13" ref="1">
    <original>E</original>
    <variation>Q</variation>
    <location>
        <position position="718"/>
    </location>
</feature>
<feature type="sequence conflict" description="In Ref. 4; AAH42490." evidence="13" ref="4">
    <original>V</original>
    <variation>T</variation>
    <location>
        <position position="862"/>
    </location>
</feature>
<feature type="sequence conflict" description="In Ref. 4; AAH42490." evidence="13" ref="4">
    <original>E</original>
    <variation>D</variation>
    <location>
        <position position="876"/>
    </location>
</feature>
<feature type="sequence conflict" description="In Ref. 4; AAH42490." evidence="13" ref="4">
    <original>P</original>
    <variation>S</variation>
    <location>
        <position position="993"/>
    </location>
</feature>
<feature type="sequence conflict" description="In Ref. 1; AAL38571." evidence="13" ref="1">
    <original>H</original>
    <variation>Q</variation>
    <location>
        <position position="1003"/>
    </location>
</feature>